<proteinExistence type="evidence at protein level"/>
<evidence type="ECO:0000250" key="1">
    <source>
        <dbReference type="UniProtKB" id="P60487"/>
    </source>
</evidence>
<evidence type="ECO:0000269" key="2">
    <source>
    </source>
</evidence>
<evidence type="ECO:0000269" key="3">
    <source>
    </source>
</evidence>
<evidence type="ECO:0000303" key="4">
    <source>
    </source>
</evidence>
<evidence type="ECO:0000303" key="5">
    <source>
    </source>
</evidence>
<evidence type="ECO:0000305" key="6"/>
<evidence type="ECO:0000305" key="7">
    <source>
    </source>
</evidence>
<evidence type="ECO:0000312" key="8">
    <source>
        <dbReference type="MGI" id="MGI:1914328"/>
    </source>
</evidence>
<evidence type="ECO:0007829" key="9">
    <source>
        <dbReference type="PDB" id="7PO7"/>
    </source>
</evidence>
<evidence type="ECO:0007829" key="10">
    <source>
        <dbReference type="PDB" id="7POE"/>
    </source>
</evidence>
<dbReference type="EC" id="3.1.3.21" evidence="3"/>
<dbReference type="EC" id="3.1.3.48" evidence="2"/>
<dbReference type="EMBL" id="BC040100">
    <property type="protein sequence ID" value="AAH40100.1"/>
    <property type="molecule type" value="mRNA"/>
</dbReference>
<dbReference type="CCDS" id="CCDS28482.1"/>
<dbReference type="RefSeq" id="NP_080230.2">
    <property type="nucleotide sequence ID" value="NM_025954.3"/>
</dbReference>
<dbReference type="PDB" id="4BKM">
    <property type="method" value="X-ray"/>
    <property type="resolution" value="2.65 A"/>
    <property type="chains" value="A/B/C/D=114-233"/>
</dbReference>
<dbReference type="PDB" id="7PO7">
    <property type="method" value="X-ray"/>
    <property type="resolution" value="2.31 A"/>
    <property type="chains" value="A/B/C/D/E/F/G/H=1-321"/>
</dbReference>
<dbReference type="PDB" id="7POE">
    <property type="method" value="X-ray"/>
    <property type="resolution" value="3.16 A"/>
    <property type="chains" value="A/B=1-321"/>
</dbReference>
<dbReference type="PDBsum" id="4BKM"/>
<dbReference type="PDBsum" id="7PO7"/>
<dbReference type="PDBsum" id="7POE"/>
<dbReference type="SMR" id="Q8CHP8"/>
<dbReference type="FunCoup" id="Q8CHP8">
    <property type="interactions" value="1025"/>
</dbReference>
<dbReference type="STRING" id="10090.ENSMUSP00000052866"/>
<dbReference type="GlyGen" id="Q8CHP8">
    <property type="glycosylation" value="2 sites, 1 N-linked glycan (1 site), 1 O-linked glycan (1 site)"/>
</dbReference>
<dbReference type="iPTMnet" id="Q8CHP8"/>
<dbReference type="PhosphoSitePlus" id="Q8CHP8"/>
<dbReference type="SwissPalm" id="Q8CHP8"/>
<dbReference type="REPRODUCTION-2DPAGE" id="IPI00380195"/>
<dbReference type="REPRODUCTION-2DPAGE" id="Q8CHP8"/>
<dbReference type="CPTAC" id="non-CPTAC-3609"/>
<dbReference type="jPOST" id="Q8CHP8"/>
<dbReference type="PaxDb" id="10090-ENSMUSP00000052866"/>
<dbReference type="PeptideAtlas" id="Q8CHP8"/>
<dbReference type="ProteomicsDB" id="288184"/>
<dbReference type="Pumba" id="Q8CHP8"/>
<dbReference type="Antibodypedia" id="54763">
    <property type="antibodies" value="148 antibodies from 23 providers"/>
</dbReference>
<dbReference type="DNASU" id="67078"/>
<dbReference type="Ensembl" id="ENSMUST00000053024.8">
    <property type="protein sequence ID" value="ENSMUSP00000052866.7"/>
    <property type="gene ID" value="ENSMUSG00000043445.8"/>
</dbReference>
<dbReference type="GeneID" id="67078"/>
<dbReference type="KEGG" id="mmu:67078"/>
<dbReference type="UCSC" id="uc008awe.1">
    <property type="organism name" value="mouse"/>
</dbReference>
<dbReference type="AGR" id="MGI:1914328"/>
<dbReference type="CTD" id="283871"/>
<dbReference type="MGI" id="MGI:1914328">
    <property type="gene designation" value="Pgp"/>
</dbReference>
<dbReference type="VEuPathDB" id="HostDB:ENSMUSG00000043445"/>
<dbReference type="eggNOG" id="KOG2882">
    <property type="taxonomic scope" value="Eukaryota"/>
</dbReference>
<dbReference type="GeneTree" id="ENSGT00940000160577"/>
<dbReference type="HOGENOM" id="CLU_043473_0_1_1"/>
<dbReference type="InParanoid" id="Q8CHP8"/>
<dbReference type="OMA" id="PPMHRET"/>
<dbReference type="OrthoDB" id="413953at2759"/>
<dbReference type="PhylomeDB" id="Q8CHP8"/>
<dbReference type="TreeFam" id="TF314344"/>
<dbReference type="BRENDA" id="3.1.3.18">
    <property type="organism ID" value="3474"/>
</dbReference>
<dbReference type="BRENDA" id="3.1.3.48">
    <property type="organism ID" value="3474"/>
</dbReference>
<dbReference type="BRENDA" id="3.1.3.74">
    <property type="organism ID" value="3474"/>
</dbReference>
<dbReference type="BioGRID-ORCS" id="67078">
    <property type="hits" value="6 hits in 78 CRISPR screens"/>
</dbReference>
<dbReference type="ChiTaRS" id="Pgp">
    <property type="organism name" value="mouse"/>
</dbReference>
<dbReference type="PRO" id="PR:Q8CHP8"/>
<dbReference type="Proteomes" id="UP000000589">
    <property type="component" value="Chromosome 17"/>
</dbReference>
<dbReference type="RNAct" id="Q8CHP8">
    <property type="molecule type" value="protein"/>
</dbReference>
<dbReference type="Bgee" id="ENSMUSG00000043445">
    <property type="expression patterns" value="Expressed in seminiferous tubule of testis and 252 other cell types or tissues"/>
</dbReference>
<dbReference type="GO" id="GO:0043262">
    <property type="term" value="F:ADP phosphatase activity"/>
    <property type="evidence" value="ECO:0000314"/>
    <property type="project" value="UniProtKB"/>
</dbReference>
<dbReference type="GO" id="GO:0000121">
    <property type="term" value="F:glycerol-1-phosphatase activity"/>
    <property type="evidence" value="ECO:0007669"/>
    <property type="project" value="RHEA"/>
</dbReference>
<dbReference type="GO" id="GO:0043136">
    <property type="term" value="F:glycerol-3-phosphatase activity"/>
    <property type="evidence" value="ECO:0000314"/>
    <property type="project" value="UniProtKB"/>
</dbReference>
<dbReference type="GO" id="GO:0000287">
    <property type="term" value="F:magnesium ion binding"/>
    <property type="evidence" value="ECO:0000314"/>
    <property type="project" value="UniProtKB"/>
</dbReference>
<dbReference type="GO" id="GO:0008967">
    <property type="term" value="F:phosphoglycolate phosphatase activity"/>
    <property type="evidence" value="ECO:0007669"/>
    <property type="project" value="Ensembl"/>
</dbReference>
<dbReference type="GO" id="GO:0004725">
    <property type="term" value="F:protein tyrosine phosphatase activity"/>
    <property type="evidence" value="ECO:0000314"/>
    <property type="project" value="UniProtKB"/>
</dbReference>
<dbReference type="GO" id="GO:0006114">
    <property type="term" value="P:glycerol biosynthetic process"/>
    <property type="evidence" value="ECO:0000314"/>
    <property type="project" value="UniProtKB"/>
</dbReference>
<dbReference type="GO" id="GO:0006650">
    <property type="term" value="P:glycerophospholipid metabolic process"/>
    <property type="evidence" value="ECO:0000314"/>
    <property type="project" value="UniProtKB"/>
</dbReference>
<dbReference type="GO" id="GO:0045721">
    <property type="term" value="P:negative regulation of gluconeogenesis"/>
    <property type="evidence" value="ECO:0000250"/>
    <property type="project" value="UniProtKB"/>
</dbReference>
<dbReference type="CDD" id="cd07510">
    <property type="entry name" value="HAD_Pase_UmpH-like"/>
    <property type="match status" value="1"/>
</dbReference>
<dbReference type="FunFam" id="3.40.50.1000:FF:000123">
    <property type="entry name" value="glycerol-3-phosphate phosphatase"/>
    <property type="match status" value="1"/>
</dbReference>
<dbReference type="Gene3D" id="3.40.50.1000">
    <property type="entry name" value="HAD superfamily/HAD-like"/>
    <property type="match status" value="2"/>
</dbReference>
<dbReference type="InterPro" id="IPR036412">
    <property type="entry name" value="HAD-like_sf"/>
</dbReference>
<dbReference type="InterPro" id="IPR006357">
    <property type="entry name" value="HAD-SF_hydro_IIA"/>
</dbReference>
<dbReference type="InterPro" id="IPR023214">
    <property type="entry name" value="HAD_sf"/>
</dbReference>
<dbReference type="InterPro" id="IPR006349">
    <property type="entry name" value="PGP_euk"/>
</dbReference>
<dbReference type="NCBIfam" id="TIGR01460">
    <property type="entry name" value="HAD-SF-IIA"/>
    <property type="match status" value="1"/>
</dbReference>
<dbReference type="NCBIfam" id="TIGR01452">
    <property type="entry name" value="PGP_euk"/>
    <property type="match status" value="1"/>
</dbReference>
<dbReference type="PANTHER" id="PTHR19288">
    <property type="entry name" value="4-NITROPHENYLPHOSPHATASE-RELATED"/>
    <property type="match status" value="1"/>
</dbReference>
<dbReference type="PANTHER" id="PTHR19288:SF92">
    <property type="entry name" value="GLYCEROL-3-PHOSPHATE PHOSPHATASE"/>
    <property type="match status" value="1"/>
</dbReference>
<dbReference type="Pfam" id="PF13344">
    <property type="entry name" value="Hydrolase_6"/>
    <property type="match status" value="1"/>
</dbReference>
<dbReference type="Pfam" id="PF13242">
    <property type="entry name" value="Hydrolase_like"/>
    <property type="match status" value="1"/>
</dbReference>
<dbReference type="PIRSF" id="PIRSF000915">
    <property type="entry name" value="PGP-type_phosphatase"/>
    <property type="match status" value="1"/>
</dbReference>
<dbReference type="SUPFAM" id="SSF56784">
    <property type="entry name" value="HAD-like"/>
    <property type="match status" value="1"/>
</dbReference>
<keyword id="KW-0002">3D-structure</keyword>
<keyword id="KW-0119">Carbohydrate metabolism</keyword>
<keyword id="KW-0378">Hydrolase</keyword>
<keyword id="KW-0460">Magnesium</keyword>
<keyword id="KW-0479">Metal-binding</keyword>
<keyword id="KW-0904">Protein phosphatase</keyword>
<keyword id="KW-1185">Reference proteome</keyword>
<sequence>MAEAEAGGDEARCVRLSAERAKLLLAEVDTLLFDCDGVLWRGETAVPGAPETLRALRARGKRLGFITNNSSKTRTAYAEKLRRLGFGGPVGPEAGLEVFGTAYCSALYLRQRLAGVPDPKAYVLGSPALAAELEAVGVTSVGVGPDVLHGDGPSDWLAVPLEPDVRAVVVGFDPHFSYMKLTKAVRYLQQPDCLLVGTNMDNRLPLENGRFIAGTGCLVRAVEMAAQRQADIIGKPSRFIFDCVSQEYGINPERTVMVGDRLDTDILLGSTCSLKTILTLTGVSSLEDVKSNQESDCMFKKKMVPDFYVDSIADLLPALQG</sequence>
<accession>Q8CHP8</accession>
<comment type="function">
    <text evidence="2 3">Glycerol-3-phosphate phosphatase hydrolyzing glycerol-3-phosphate into glycerol. Thereby, regulates the cellular levels of glycerol-3-phosphate a metabolic intermediate of glucose, lipid and energy metabolism (PubMed:26755581). Was also shown to have a 2-phosphoglycolate phosphatase activity and a tyrosine-protein phosphatase activity. However, their physiological relevance is unclear (PubMed:24338473, PubMed:26755581). In vitro, also has a phosphatase activity toward ADP, ATP, GDP and GTP (PubMed:24338473).</text>
</comment>
<comment type="catalytic activity">
    <reaction evidence="2">
        <text>O-phospho-L-tyrosyl-[protein] + H2O = L-tyrosyl-[protein] + phosphate</text>
        <dbReference type="Rhea" id="RHEA:10684"/>
        <dbReference type="Rhea" id="RHEA-COMP:10136"/>
        <dbReference type="Rhea" id="RHEA-COMP:20101"/>
        <dbReference type="ChEBI" id="CHEBI:15377"/>
        <dbReference type="ChEBI" id="CHEBI:43474"/>
        <dbReference type="ChEBI" id="CHEBI:46858"/>
        <dbReference type="ChEBI" id="CHEBI:61978"/>
        <dbReference type="EC" id="3.1.3.48"/>
    </reaction>
</comment>
<comment type="catalytic activity">
    <reaction evidence="3">
        <text>sn-glycerol 1-phosphate + H2O = glycerol + phosphate</text>
        <dbReference type="Rhea" id="RHEA:46084"/>
        <dbReference type="ChEBI" id="CHEBI:15377"/>
        <dbReference type="ChEBI" id="CHEBI:17754"/>
        <dbReference type="ChEBI" id="CHEBI:43474"/>
        <dbReference type="ChEBI" id="CHEBI:57685"/>
        <dbReference type="EC" id="3.1.3.21"/>
    </reaction>
</comment>
<comment type="catalytic activity">
    <reaction evidence="3">
        <text>sn-glycerol 3-phosphate + H2O = glycerol + phosphate</text>
        <dbReference type="Rhea" id="RHEA:66372"/>
        <dbReference type="ChEBI" id="CHEBI:15377"/>
        <dbReference type="ChEBI" id="CHEBI:17754"/>
        <dbReference type="ChEBI" id="CHEBI:43474"/>
        <dbReference type="ChEBI" id="CHEBI:57597"/>
        <dbReference type="EC" id="3.1.3.21"/>
    </reaction>
</comment>
<comment type="cofactor">
    <cofactor evidence="2">
        <name>Mg(2+)</name>
        <dbReference type="ChEBI" id="CHEBI:18420"/>
    </cofactor>
    <text evidence="2">Binds 1 Mg(2+) ion per subunit.</text>
</comment>
<comment type="activity regulation">
    <text evidence="2">Inhibited by orthovanadate, beryllium trifluoride, Ca(2+) and EDTA.</text>
</comment>
<comment type="biophysicochemical properties">
    <kinetics>
        <KM evidence="2">0.42 mM for ADP</KM>
        <KM evidence="2">1.23 mM for ATP</KM>
        <KM evidence="2">1.48 mM for GDP</KM>
        <KM evidence="2">1.47 mM for GTP</KM>
        <KM evidence="3">1.29 mM for glycerol-3-phosphate</KM>
        <Vmax evidence="3">100.0 nmol/min/mg enzyme with glycerol-3-phosphate as substrate</Vmax>
        <text evidence="3">kcat is 0.1 sec(-1) with glycerol-3-phosphate.</text>
    </kinetics>
</comment>
<comment type="subunit">
    <text evidence="2">Homodimer.</text>
</comment>
<comment type="tissue specificity">
    <text evidence="2 3">Ubiquitously expressed with higher expression in testis, heart, skeletal muscle and islet tissue (at protein level).</text>
</comment>
<comment type="induction">
    <text evidence="3">Up-regulated in white adipose tissue and down-regulated in brown adipose tissue upon fasting.</text>
</comment>
<comment type="similarity">
    <text evidence="6">Belongs to the HAD-like hydrolase superfamily. CbbY/CbbZ/Gph/YieH family.</text>
</comment>
<feature type="chain" id="PRO_0000316889" description="Glycerol-3-phosphate phosphatase">
    <location>
        <begin position="1"/>
        <end position="321"/>
    </location>
</feature>
<feature type="active site" description="Nucleophile" evidence="2">
    <location>
        <position position="34"/>
    </location>
</feature>
<feature type="active site" description="Proton donor" evidence="6">
    <location>
        <position position="36"/>
    </location>
</feature>
<feature type="binding site" evidence="1">
    <location>
        <position position="34"/>
    </location>
    <ligand>
        <name>Mg(2+)</name>
        <dbReference type="ChEBI" id="CHEBI:18420"/>
    </ligand>
</feature>
<feature type="binding site" evidence="1">
    <location>
        <position position="36"/>
    </location>
    <ligand>
        <name>Mg(2+)</name>
        <dbReference type="ChEBI" id="CHEBI:18420"/>
    </ligand>
</feature>
<feature type="binding site" evidence="1">
    <location>
        <position position="260"/>
    </location>
    <ligand>
        <name>Mg(2+)</name>
        <dbReference type="ChEBI" id="CHEBI:18420"/>
    </ligand>
</feature>
<feature type="site" description="Important for substrate specificity" evidence="7">
    <location>
        <position position="204"/>
    </location>
</feature>
<feature type="mutagenesis site" description="Abolishes phosphatase activity." evidence="2">
    <original>D</original>
    <variation>N</variation>
    <location>
        <position position="34"/>
    </location>
</feature>
<feature type="mutagenesis site" description="Slightly increases phosphatase activity with p-nitrophenylphosphate; when associated with R-44 and I-45." evidence="2">
    <original>R</original>
    <variation>N</variation>
    <location>
        <position position="41"/>
    </location>
</feature>
<feature type="mutagenesis site" description="Slightly increases phosphatase activity with p-nitrophenylphosphate; when associated with N-41 and I-45." evidence="2">
    <original>T</original>
    <variation>R</variation>
    <location>
        <position position="44"/>
    </location>
</feature>
<feature type="mutagenesis site" description="Slightly increases phosphatase activity with p-nitrophenylphosphate; when associated with N-41 and R-44." evidence="2">
    <original>A</original>
    <variation>I</variation>
    <location>
        <position position="45"/>
    </location>
</feature>
<feature type="mutagenesis site" description="Strongly reduces phosphatase activity; when associated with R-71; R-72 and A-73. Abolishes phosphatase activity; when associated with R-72 and A-73." evidence="2">
    <original>T</original>
    <variation>S</variation>
    <location>
        <position position="67"/>
    </location>
</feature>
<feature type="mutagenesis site" description="Mildly reduces phosphatase activity; when associated with R-72 and A-73. Strongly reduces phosphatase activity; when associated with S-67; R-72 and A-73." evidence="2">
    <original>S</original>
    <variation>R</variation>
    <location>
        <position position="71"/>
    </location>
</feature>
<feature type="mutagenesis site" description="Mildly reduces phosphatase activity; when associated with R-71 and A-73. Strongly reduces phosphatase activity; when associated with S-67; R-71 and A-73. Abolishes phosphatase activity; when associated with S-67 and A-73." evidence="2">
    <original>K</original>
    <variation>R</variation>
    <location>
        <position position="72"/>
    </location>
</feature>
<feature type="mutagenesis site" description="Abolishes phosphatase activity. Abolishes phosphatase activity; when associated with S-67 and R-72. Strongly reduces phosphatase activity; when associated with S-67; R-71 and R-72. Mildly reduces phosphatase activity; when associated with R-71 and R-72." evidence="2">
    <original>T</original>
    <variation>A</variation>
    <location>
        <position position="73"/>
    </location>
</feature>
<feature type="mutagenesis site" description="Strongly increases activity with pyridoxal phosphate." evidence="2">
    <original>L</original>
    <variation>H</variation>
    <location>
        <position position="204"/>
    </location>
</feature>
<feature type="helix" evidence="9">
    <location>
        <begin position="18"/>
        <end position="27"/>
    </location>
</feature>
<feature type="strand" evidence="9">
    <location>
        <begin position="29"/>
        <end position="33"/>
    </location>
</feature>
<feature type="turn" evidence="9">
    <location>
        <begin position="37"/>
        <end position="39"/>
    </location>
</feature>
<feature type="helix" evidence="9">
    <location>
        <begin position="49"/>
        <end position="58"/>
    </location>
</feature>
<feature type="strand" evidence="9">
    <location>
        <begin position="62"/>
        <end position="67"/>
    </location>
</feature>
<feature type="helix" evidence="9">
    <location>
        <begin position="74"/>
        <end position="83"/>
    </location>
</feature>
<feature type="strand" evidence="9">
    <location>
        <begin position="91"/>
        <end position="93"/>
    </location>
</feature>
<feature type="helix" evidence="10">
    <location>
        <begin position="94"/>
        <end position="97"/>
    </location>
</feature>
<feature type="strand" evidence="9">
    <location>
        <begin position="98"/>
        <end position="100"/>
    </location>
</feature>
<feature type="helix" evidence="9">
    <location>
        <begin position="101"/>
        <end position="112"/>
    </location>
</feature>
<feature type="turn" evidence="9">
    <location>
        <begin position="113"/>
        <end position="115"/>
    </location>
</feature>
<feature type="strand" evidence="9">
    <location>
        <begin position="120"/>
        <end position="125"/>
    </location>
</feature>
<feature type="helix" evidence="9">
    <location>
        <begin position="127"/>
        <end position="135"/>
    </location>
</feature>
<feature type="strand" evidence="9">
    <location>
        <begin position="139"/>
        <end position="141"/>
    </location>
</feature>
<feature type="strand" evidence="9">
    <location>
        <begin position="150"/>
        <end position="152"/>
    </location>
</feature>
<feature type="helix" evidence="9">
    <location>
        <begin position="153"/>
        <end position="158"/>
    </location>
</feature>
<feature type="strand" evidence="9">
    <location>
        <begin position="163"/>
        <end position="170"/>
    </location>
</feature>
<feature type="helix" evidence="9">
    <location>
        <begin position="178"/>
        <end position="188"/>
    </location>
</feature>
<feature type="strand" evidence="9">
    <location>
        <begin position="194"/>
        <end position="198"/>
    </location>
</feature>
<feature type="strand" evidence="9">
    <location>
        <begin position="202"/>
        <end position="205"/>
    </location>
</feature>
<feature type="helix" evidence="9">
    <location>
        <begin position="207"/>
        <end position="209"/>
    </location>
</feature>
<feature type="strand" evidence="9">
    <location>
        <begin position="211"/>
        <end position="213"/>
    </location>
</feature>
<feature type="helix" evidence="9">
    <location>
        <begin position="215"/>
        <end position="226"/>
    </location>
</feature>
<feature type="helix" evidence="9">
    <location>
        <begin position="238"/>
        <end position="248"/>
    </location>
</feature>
<feature type="helix" evidence="9">
    <location>
        <begin position="252"/>
        <end position="254"/>
    </location>
</feature>
<feature type="strand" evidence="9">
    <location>
        <begin position="255"/>
        <end position="260"/>
    </location>
</feature>
<feature type="turn" evidence="9">
    <location>
        <begin position="262"/>
        <end position="264"/>
    </location>
</feature>
<feature type="helix" evidence="9">
    <location>
        <begin position="265"/>
        <end position="271"/>
    </location>
</feature>
<feature type="strand" evidence="9">
    <location>
        <begin position="275"/>
        <end position="279"/>
    </location>
</feature>
<feature type="helix" evidence="9">
    <location>
        <begin position="286"/>
        <end position="293"/>
    </location>
</feature>
<feature type="helix" evidence="9">
    <location>
        <begin position="298"/>
        <end position="302"/>
    </location>
</feature>
<feature type="strand" evidence="9">
    <location>
        <begin position="306"/>
        <end position="310"/>
    </location>
</feature>
<feature type="helix" evidence="9">
    <location>
        <begin position="312"/>
        <end position="315"/>
    </location>
</feature>
<feature type="turn" evidence="9">
    <location>
        <begin position="316"/>
        <end position="318"/>
    </location>
</feature>
<organism>
    <name type="scientific">Mus musculus</name>
    <name type="common">Mouse</name>
    <dbReference type="NCBI Taxonomy" id="10090"/>
    <lineage>
        <taxon>Eukaryota</taxon>
        <taxon>Metazoa</taxon>
        <taxon>Chordata</taxon>
        <taxon>Craniata</taxon>
        <taxon>Vertebrata</taxon>
        <taxon>Euteleostomi</taxon>
        <taxon>Mammalia</taxon>
        <taxon>Eutheria</taxon>
        <taxon>Euarchontoglires</taxon>
        <taxon>Glires</taxon>
        <taxon>Rodentia</taxon>
        <taxon>Myomorpha</taxon>
        <taxon>Muroidea</taxon>
        <taxon>Muridae</taxon>
        <taxon>Murinae</taxon>
        <taxon>Mus</taxon>
        <taxon>Mus</taxon>
    </lineage>
</organism>
<name>PGP_MOUSE</name>
<gene>
    <name evidence="8" type="primary">Pgp</name>
</gene>
<protein>
    <recommendedName>
        <fullName evidence="6">Glycerol-3-phosphate phosphatase</fullName>
        <shortName evidence="5">G3PP</shortName>
        <ecNumber evidence="3">3.1.3.21</ecNumber>
    </recommendedName>
    <alternativeName>
        <fullName evidence="4">Aspartate-based ubiquitous Mg(2+)-dependent phosphatase</fullName>
        <shortName evidence="4">AUM</shortName>
        <ecNumber evidence="2">3.1.3.48</ecNumber>
    </alternativeName>
    <alternativeName>
        <fullName evidence="4">Phosphoglycolate phosphatase</fullName>
        <shortName evidence="4">PGP</shortName>
    </alternativeName>
</protein>
<reference key="1">
    <citation type="journal article" date="2004" name="Genome Res.">
        <title>The status, quality, and expansion of the NIH full-length cDNA project: the Mammalian Gene Collection (MGC).</title>
        <authorList>
            <consortium name="The MGC Project Team"/>
        </authorList>
    </citation>
    <scope>NUCLEOTIDE SEQUENCE [LARGE SCALE MRNA]</scope>
    <source>
        <strain>FVB/N</strain>
        <tissue>Mammary tumor</tissue>
    </source>
</reference>
<reference key="2">
    <citation type="journal article" date="2010" name="Cell">
        <title>A tissue-specific atlas of mouse protein phosphorylation and expression.</title>
        <authorList>
            <person name="Huttlin E.L."/>
            <person name="Jedrychowski M.P."/>
            <person name="Elias J.E."/>
            <person name="Goswami T."/>
            <person name="Rad R."/>
            <person name="Beausoleil S.A."/>
            <person name="Villen J."/>
            <person name="Haas W."/>
            <person name="Sowa M.E."/>
            <person name="Gygi S.P."/>
        </authorList>
    </citation>
    <scope>IDENTIFICATION BY MASS SPECTROMETRY [LARGE SCALE ANALYSIS]</scope>
    <source>
        <tissue>Brain</tissue>
        <tissue>Brown adipose tissue</tissue>
        <tissue>Heart</tissue>
        <tissue>Kidney</tissue>
        <tissue>Liver</tissue>
        <tissue>Lung</tissue>
        <tissue>Pancreas</tissue>
        <tissue>Spleen</tissue>
        <tissue>Testis</tissue>
    </source>
</reference>
<reference key="3">
    <citation type="journal article" date="2016" name="Proc. Natl. Acad. Sci. U.S.A.">
        <title>Identification of a mammalian glycerol-3-phosphate phosphatase: Role in metabolism and signaling in pancreatic beta-cells and hepatocytes.</title>
        <authorList>
            <person name="Mugabo Y."/>
            <person name="Zhao S."/>
            <person name="Seifried A."/>
            <person name="Gezzar S."/>
            <person name="Al-Mass A."/>
            <person name="Zhang D."/>
            <person name="Lamontagne J."/>
            <person name="Attane C."/>
            <person name="Poursharifi P."/>
            <person name="Iglesias J."/>
            <person name="Joly E."/>
            <person name="Peyot M.L."/>
            <person name="Gohla A."/>
            <person name="Madiraju S.R."/>
            <person name="Prentki M."/>
        </authorList>
    </citation>
    <scope>FUNCTION</scope>
    <scope>CATALYTIC ACTIVITY</scope>
    <scope>BIOPHYSICOCHEMICAL PROPERTIES</scope>
    <scope>TISSUE SPECIFICITY</scope>
    <scope>INDUCTION</scope>
</reference>
<reference key="4">
    <citation type="journal article" date="2014" name="J. Biol. Chem.">
        <title>Evolutionary and structural analyses of the mammalian haloacid dehalogenase-type phosphatases AUM and chronophin provide insight into the basis of their different substrate specificities.</title>
        <authorList>
            <person name="Seifried A."/>
            <person name="Knobloch G."/>
            <person name="Duraphe P.S."/>
            <person name="Segerer G."/>
            <person name="Manhard J."/>
            <person name="Schindelin H."/>
            <person name="Schultz J."/>
            <person name="Gohla A."/>
        </authorList>
    </citation>
    <scope>X-RAY CRYSTALLOGRAPHY (2.65 ANGSTROMS) OF 44-233 IN COMPLEX WITH MAGNESIUM</scope>
    <scope>CATALYTIC ACTIVITY</scope>
    <scope>COFACTOR</scope>
    <scope>TISSUE SPECIFICITY</scope>
    <scope>MUTAGENESIS OF ASP-34; ARG-41; THR-44; ALA-45; THR-67; SER-71; LYS-72; THR-73 AND LEU-204</scope>
    <scope>ACTIVE SITE</scope>
    <scope>BIOPHYSICOCHEMICAL PROPERTIES</scope>
    <scope>ACTIVITY REGULATION</scope>
    <scope>SUBUNIT</scope>
</reference>